<name>RUVC_GLUOX</name>
<comment type="function">
    <text evidence="1">The RuvA-RuvB-RuvC complex processes Holliday junction (HJ) DNA during genetic recombination and DNA repair. Endonuclease that resolves HJ intermediates. Cleaves cruciform DNA by making single-stranded nicks across the HJ at symmetrical positions within the homologous arms, yielding a 5'-phosphate and a 3'-hydroxyl group; requires a central core of homology in the junction. The consensus cleavage sequence is 5'-(A/T)TT(C/G)-3'. Cleavage occurs on the 3'-side of the TT dinucleotide at the point of strand exchange. HJ branch migration catalyzed by RuvA-RuvB allows RuvC to scan DNA until it finds its consensus sequence, where it cleaves and resolves the cruciform DNA.</text>
</comment>
<comment type="catalytic activity">
    <reaction evidence="1">
        <text>Endonucleolytic cleavage at a junction such as a reciprocal single-stranded crossover between two homologous DNA duplexes (Holliday junction).</text>
        <dbReference type="EC" id="3.1.21.10"/>
    </reaction>
</comment>
<comment type="cofactor">
    <cofactor evidence="1">
        <name>Mg(2+)</name>
        <dbReference type="ChEBI" id="CHEBI:18420"/>
    </cofactor>
    <text evidence="1">Binds 2 Mg(2+) ion per subunit.</text>
</comment>
<comment type="subunit">
    <text evidence="1">Homodimer which binds Holliday junction (HJ) DNA. The HJ becomes 2-fold symmetrical on binding to RuvC with unstacked arms; it has a different conformation from HJ DNA in complex with RuvA. In the full resolvosome a probable DNA-RuvA(4)-RuvB(12)-RuvC(2) complex forms which resolves the HJ.</text>
</comment>
<comment type="subcellular location">
    <subcellularLocation>
        <location evidence="1">Cytoplasm</location>
    </subcellularLocation>
</comment>
<comment type="similarity">
    <text evidence="1">Belongs to the RuvC family.</text>
</comment>
<proteinExistence type="inferred from homology"/>
<sequence>MIRLMGIDPGLRFMGWGIIDVDGNHLKHVASGVIGTDGSESVPLRLCELHGALKKLIREYAPAEAAVEETYVNRNGSSTLKLGYARGVALLTPAYEGLPVAEYGAMTVKKSVVGTGSASKEQVTMMVKRLLPGAEIRKADASDALAVAICHAHHRASAAHVVAGKRMA</sequence>
<protein>
    <recommendedName>
        <fullName evidence="1">Crossover junction endodeoxyribonuclease RuvC</fullName>
        <ecNumber evidence="1">3.1.21.10</ecNumber>
    </recommendedName>
    <alternativeName>
        <fullName evidence="1">Holliday junction nuclease RuvC</fullName>
    </alternativeName>
    <alternativeName>
        <fullName evidence="1">Holliday junction resolvase RuvC</fullName>
    </alternativeName>
</protein>
<evidence type="ECO:0000255" key="1">
    <source>
        <dbReference type="HAMAP-Rule" id="MF_00034"/>
    </source>
</evidence>
<feature type="chain" id="PRO_0000225147" description="Crossover junction endodeoxyribonuclease RuvC">
    <location>
        <begin position="1"/>
        <end position="168"/>
    </location>
</feature>
<feature type="active site" evidence="1">
    <location>
        <position position="8"/>
    </location>
</feature>
<feature type="active site" evidence="1">
    <location>
        <position position="68"/>
    </location>
</feature>
<feature type="active site" evidence="1">
    <location>
        <position position="140"/>
    </location>
</feature>
<feature type="binding site" evidence="1">
    <location>
        <position position="8"/>
    </location>
    <ligand>
        <name>Mg(2+)</name>
        <dbReference type="ChEBI" id="CHEBI:18420"/>
        <label>1</label>
    </ligand>
</feature>
<feature type="binding site" evidence="1">
    <location>
        <position position="68"/>
    </location>
    <ligand>
        <name>Mg(2+)</name>
        <dbReference type="ChEBI" id="CHEBI:18420"/>
        <label>2</label>
    </ligand>
</feature>
<feature type="binding site" evidence="1">
    <location>
        <position position="140"/>
    </location>
    <ligand>
        <name>Mg(2+)</name>
        <dbReference type="ChEBI" id="CHEBI:18420"/>
        <label>1</label>
    </ligand>
</feature>
<dbReference type="EC" id="3.1.21.10" evidence="1"/>
<dbReference type="EMBL" id="CP000009">
    <property type="protein sequence ID" value="AAW61420.1"/>
    <property type="molecule type" value="Genomic_DNA"/>
</dbReference>
<dbReference type="RefSeq" id="WP_011253202.1">
    <property type="nucleotide sequence ID" value="NZ_LT900338.1"/>
</dbReference>
<dbReference type="SMR" id="Q5FQC6"/>
<dbReference type="STRING" id="290633.GOX1680"/>
<dbReference type="KEGG" id="gox:GOX1680"/>
<dbReference type="eggNOG" id="COG0817">
    <property type="taxonomic scope" value="Bacteria"/>
</dbReference>
<dbReference type="HOGENOM" id="CLU_091257_1_0_5"/>
<dbReference type="Proteomes" id="UP000006375">
    <property type="component" value="Chromosome"/>
</dbReference>
<dbReference type="GO" id="GO:0005737">
    <property type="term" value="C:cytoplasm"/>
    <property type="evidence" value="ECO:0007669"/>
    <property type="project" value="UniProtKB-SubCell"/>
</dbReference>
<dbReference type="GO" id="GO:0048476">
    <property type="term" value="C:Holliday junction resolvase complex"/>
    <property type="evidence" value="ECO:0007669"/>
    <property type="project" value="UniProtKB-UniRule"/>
</dbReference>
<dbReference type="GO" id="GO:0008821">
    <property type="term" value="F:crossover junction DNA endonuclease activity"/>
    <property type="evidence" value="ECO:0007669"/>
    <property type="project" value="UniProtKB-UniRule"/>
</dbReference>
<dbReference type="GO" id="GO:0003677">
    <property type="term" value="F:DNA binding"/>
    <property type="evidence" value="ECO:0007669"/>
    <property type="project" value="UniProtKB-KW"/>
</dbReference>
<dbReference type="GO" id="GO:0000287">
    <property type="term" value="F:magnesium ion binding"/>
    <property type="evidence" value="ECO:0007669"/>
    <property type="project" value="UniProtKB-UniRule"/>
</dbReference>
<dbReference type="GO" id="GO:0006310">
    <property type="term" value="P:DNA recombination"/>
    <property type="evidence" value="ECO:0007669"/>
    <property type="project" value="UniProtKB-UniRule"/>
</dbReference>
<dbReference type="GO" id="GO:0006281">
    <property type="term" value="P:DNA repair"/>
    <property type="evidence" value="ECO:0007669"/>
    <property type="project" value="UniProtKB-UniRule"/>
</dbReference>
<dbReference type="CDD" id="cd16962">
    <property type="entry name" value="RuvC"/>
    <property type="match status" value="1"/>
</dbReference>
<dbReference type="FunFam" id="3.30.420.10:FF:000002">
    <property type="entry name" value="Crossover junction endodeoxyribonuclease RuvC"/>
    <property type="match status" value="1"/>
</dbReference>
<dbReference type="Gene3D" id="3.30.420.10">
    <property type="entry name" value="Ribonuclease H-like superfamily/Ribonuclease H"/>
    <property type="match status" value="1"/>
</dbReference>
<dbReference type="HAMAP" id="MF_00034">
    <property type="entry name" value="RuvC"/>
    <property type="match status" value="1"/>
</dbReference>
<dbReference type="InterPro" id="IPR012337">
    <property type="entry name" value="RNaseH-like_sf"/>
</dbReference>
<dbReference type="InterPro" id="IPR036397">
    <property type="entry name" value="RNaseH_sf"/>
</dbReference>
<dbReference type="InterPro" id="IPR020563">
    <property type="entry name" value="X-over_junc_endoDNase_Mg_BS"/>
</dbReference>
<dbReference type="InterPro" id="IPR002176">
    <property type="entry name" value="X-over_junc_endoDNase_RuvC"/>
</dbReference>
<dbReference type="NCBIfam" id="TIGR00228">
    <property type="entry name" value="ruvC"/>
    <property type="match status" value="1"/>
</dbReference>
<dbReference type="PANTHER" id="PTHR30194">
    <property type="entry name" value="CROSSOVER JUNCTION ENDODEOXYRIBONUCLEASE RUVC"/>
    <property type="match status" value="1"/>
</dbReference>
<dbReference type="PANTHER" id="PTHR30194:SF3">
    <property type="entry name" value="CROSSOVER JUNCTION ENDODEOXYRIBONUCLEASE RUVC"/>
    <property type="match status" value="1"/>
</dbReference>
<dbReference type="Pfam" id="PF02075">
    <property type="entry name" value="RuvC"/>
    <property type="match status" value="1"/>
</dbReference>
<dbReference type="PRINTS" id="PR00696">
    <property type="entry name" value="RSOLVASERUVC"/>
</dbReference>
<dbReference type="SUPFAM" id="SSF53098">
    <property type="entry name" value="Ribonuclease H-like"/>
    <property type="match status" value="1"/>
</dbReference>
<dbReference type="PROSITE" id="PS01321">
    <property type="entry name" value="RUVC"/>
    <property type="match status" value="1"/>
</dbReference>
<reference key="1">
    <citation type="journal article" date="2005" name="Nat. Biotechnol.">
        <title>Complete genome sequence of the acetic acid bacterium Gluconobacter oxydans.</title>
        <authorList>
            <person name="Prust C."/>
            <person name="Hoffmeister M."/>
            <person name="Liesegang H."/>
            <person name="Wiezer A."/>
            <person name="Fricke W.F."/>
            <person name="Ehrenreich A."/>
            <person name="Gottschalk G."/>
            <person name="Deppenmeier U."/>
        </authorList>
    </citation>
    <scope>NUCLEOTIDE SEQUENCE [LARGE SCALE GENOMIC DNA]</scope>
    <source>
        <strain>621H</strain>
    </source>
</reference>
<keyword id="KW-0963">Cytoplasm</keyword>
<keyword id="KW-0227">DNA damage</keyword>
<keyword id="KW-0233">DNA recombination</keyword>
<keyword id="KW-0234">DNA repair</keyword>
<keyword id="KW-0238">DNA-binding</keyword>
<keyword id="KW-0255">Endonuclease</keyword>
<keyword id="KW-0378">Hydrolase</keyword>
<keyword id="KW-0460">Magnesium</keyword>
<keyword id="KW-0479">Metal-binding</keyword>
<keyword id="KW-0540">Nuclease</keyword>
<keyword id="KW-1185">Reference proteome</keyword>
<organism>
    <name type="scientific">Gluconobacter oxydans (strain 621H)</name>
    <name type="common">Gluconobacter suboxydans</name>
    <dbReference type="NCBI Taxonomy" id="290633"/>
    <lineage>
        <taxon>Bacteria</taxon>
        <taxon>Pseudomonadati</taxon>
        <taxon>Pseudomonadota</taxon>
        <taxon>Alphaproteobacteria</taxon>
        <taxon>Acetobacterales</taxon>
        <taxon>Acetobacteraceae</taxon>
        <taxon>Gluconobacter</taxon>
    </lineage>
</organism>
<accession>Q5FQC6</accession>
<gene>
    <name evidence="1" type="primary">ruvC</name>
    <name type="ordered locus">GOX1680</name>
</gene>